<accession>P33589</accession>
<comment type="function">
    <text evidence="3 5 6">Thrombin-like snake venom serine protease, that cleaves alpha-chain of fibrinogen (FGA) releases only fibrinopeptide A. Shows coagulant, esterase and amidase activities. Induces the barrel rotation syndrome in mice, which is manifested by gyroxin-like, rapid rolling motions. May also reversibly increase the permeability of the blood brain barrier (BBB) in mice.</text>
</comment>
<comment type="catalytic activity">
    <reaction>
        <text>Selective cleavage of Arg-|-Xaa bond in fibrinogen, to form fibrin, and release fibrinopeptide A. The specificity of further degradation of fibrinogen varies with species origin of the enzyme.</text>
        <dbReference type="EC" id="3.4.21.74"/>
    </reaction>
</comment>
<comment type="activity regulation">
    <text>Inhibited competitively by amidines and guanidines, and irreversibly inhibited by diisopropylfluorophosphate.</text>
</comment>
<comment type="subunit">
    <text evidence="4">Monomer.</text>
</comment>
<comment type="subcellular location">
    <subcellularLocation>
        <location>Secreted</location>
    </subcellularLocation>
</comment>
<comment type="tissue specificity">
    <text>Expressed by the venom gland.</text>
</comment>
<comment type="miscellaneous">
    <text evidence="8">Negative results: does not have phospholipase activity, does not aggregate platelet, and does not affect the release of the neurotransmitters dopamine and acetylcholine in the nervous system.</text>
</comment>
<comment type="similarity">
    <text evidence="2">Belongs to the peptidase S1 family. Snake venom subfamily.</text>
</comment>
<keyword id="KW-1204">Blood coagulation cascade activating toxin</keyword>
<keyword id="KW-0903">Direct protein sequencing</keyword>
<keyword id="KW-1015">Disulfide bond</keyword>
<keyword id="KW-0325">Glycoprotein</keyword>
<keyword id="KW-1199">Hemostasis impairing toxin</keyword>
<keyword id="KW-0378">Hydrolase</keyword>
<keyword id="KW-0645">Protease</keyword>
<keyword id="KW-0964">Secreted</keyword>
<keyword id="KW-0720">Serine protease</keyword>
<keyword id="KW-0800">Toxin</keyword>
<sequence>VIGGDECNINEHRFLVALYDGLSGTFLCGGTLINQEWVLTAQHCNRSLMNIYLGMHNKNVKFDDEQRRYPKKKYFFRCNKNFTKWDEDIRLNRPVRFSAHIEPLSLPSNPPSEDSVCRVMGWGQITSPPETLPDVPHCANINLFNYTVCRGAYPRMPTKVLCAGVLEGGIDTCNRDSGGPLICNGQFQGIVFWGPDPCAQPDKPGVYTKVFDYLDWIQSVIAGNTTCS</sequence>
<name>VSPF_LACMU</name>
<dbReference type="EC" id="3.4.21.74"/>
<dbReference type="PIR" id="S35689">
    <property type="entry name" value="S35689"/>
</dbReference>
<dbReference type="SMR" id="P33589"/>
<dbReference type="MEROPS" id="S01.432"/>
<dbReference type="GO" id="GO:0005576">
    <property type="term" value="C:extracellular region"/>
    <property type="evidence" value="ECO:0007669"/>
    <property type="project" value="UniProtKB-SubCell"/>
</dbReference>
<dbReference type="GO" id="GO:0030141">
    <property type="term" value="C:secretory granule"/>
    <property type="evidence" value="ECO:0007669"/>
    <property type="project" value="TreeGrafter"/>
</dbReference>
<dbReference type="GO" id="GO:0004252">
    <property type="term" value="F:serine-type endopeptidase activity"/>
    <property type="evidence" value="ECO:0007669"/>
    <property type="project" value="InterPro"/>
</dbReference>
<dbReference type="GO" id="GO:0090729">
    <property type="term" value="F:toxin activity"/>
    <property type="evidence" value="ECO:0007669"/>
    <property type="project" value="UniProtKB-KW"/>
</dbReference>
<dbReference type="GO" id="GO:0006508">
    <property type="term" value="P:proteolysis"/>
    <property type="evidence" value="ECO:0007669"/>
    <property type="project" value="UniProtKB-KW"/>
</dbReference>
<dbReference type="CDD" id="cd00190">
    <property type="entry name" value="Tryp_SPc"/>
    <property type="match status" value="1"/>
</dbReference>
<dbReference type="FunFam" id="2.40.10.10:FF:000158">
    <property type="entry name" value="Thrombin-like enzyme saxthrombin"/>
    <property type="match status" value="1"/>
</dbReference>
<dbReference type="Gene3D" id="2.40.10.10">
    <property type="entry name" value="Trypsin-like serine proteases"/>
    <property type="match status" value="2"/>
</dbReference>
<dbReference type="InterPro" id="IPR009003">
    <property type="entry name" value="Peptidase_S1_PA"/>
</dbReference>
<dbReference type="InterPro" id="IPR043504">
    <property type="entry name" value="Peptidase_S1_PA_chymotrypsin"/>
</dbReference>
<dbReference type="InterPro" id="IPR001314">
    <property type="entry name" value="Peptidase_S1A"/>
</dbReference>
<dbReference type="InterPro" id="IPR001254">
    <property type="entry name" value="Trypsin_dom"/>
</dbReference>
<dbReference type="PANTHER" id="PTHR24271:SF47">
    <property type="entry name" value="KALLIKREIN-1"/>
    <property type="match status" value="1"/>
</dbReference>
<dbReference type="PANTHER" id="PTHR24271">
    <property type="entry name" value="KALLIKREIN-RELATED"/>
    <property type="match status" value="1"/>
</dbReference>
<dbReference type="Pfam" id="PF00089">
    <property type="entry name" value="Trypsin"/>
    <property type="match status" value="1"/>
</dbReference>
<dbReference type="PRINTS" id="PR00722">
    <property type="entry name" value="CHYMOTRYPSIN"/>
</dbReference>
<dbReference type="SMART" id="SM00020">
    <property type="entry name" value="Tryp_SPc"/>
    <property type="match status" value="1"/>
</dbReference>
<dbReference type="SUPFAM" id="SSF50494">
    <property type="entry name" value="Trypsin-like serine proteases"/>
    <property type="match status" value="1"/>
</dbReference>
<dbReference type="PROSITE" id="PS50240">
    <property type="entry name" value="TRYPSIN_DOM"/>
    <property type="match status" value="1"/>
</dbReference>
<feature type="chain" id="PRO_0000088740" description="Thrombin-like enzyme gyroxin analog">
    <location>
        <begin position="1"/>
        <end position="228"/>
    </location>
</feature>
<feature type="domain" description="Peptidase S1" evidence="2">
    <location>
        <begin position="1"/>
        <end position="222"/>
    </location>
</feature>
<feature type="active site" description="Charge relay system">
    <location>
        <position position="43"/>
    </location>
</feature>
<feature type="active site" description="Charge relay system">
    <location>
        <position position="88"/>
    </location>
</feature>
<feature type="active site" description="Charge relay system">
    <location>
        <position position="177"/>
    </location>
</feature>
<feature type="glycosylation site" description="N-linked (GlcNAc...) asparagine" evidence="1">
    <location>
        <position position="45"/>
    </location>
</feature>
<feature type="glycosylation site" description="N-linked (GlcNAc...) asparagine" evidence="1">
    <location>
        <position position="81"/>
    </location>
</feature>
<feature type="glycosylation site" description="N-linked (GlcNAc...) asparagine" evidence="1">
    <location>
        <position position="145"/>
    </location>
</feature>
<feature type="glycosylation site" description="N-linked (GlcNAc...) asparagine" evidence="1">
    <location>
        <position position="224"/>
    </location>
</feature>
<feature type="disulfide bond" evidence="2">
    <location>
        <begin position="7"/>
        <end position="138"/>
    </location>
</feature>
<feature type="disulfide bond" evidence="2">
    <location>
        <begin position="28"/>
        <end position="44"/>
    </location>
</feature>
<feature type="disulfide bond" evidence="2">
    <location>
        <begin position="78"/>
        <end position="227"/>
    </location>
</feature>
<feature type="disulfide bond" evidence="2">
    <location>
        <begin position="117"/>
        <end position="183"/>
    </location>
</feature>
<feature type="disulfide bond" evidence="2">
    <location>
        <begin position="149"/>
        <end position="162"/>
    </location>
</feature>
<feature type="disulfide bond" evidence="2">
    <location>
        <begin position="173"/>
        <end position="198"/>
    </location>
</feature>
<feature type="sequence conflict" description="In Ref. 2; AA sequence." evidence="7" ref="2">
    <original>E</original>
    <variation>A</variation>
    <location>
        <position position="102"/>
    </location>
</feature>
<feature type="sequence conflict" description="In Ref. 2; AA sequence." evidence="7" ref="2">
    <original>N</original>
    <variation>S</variation>
    <location>
        <position position="109"/>
    </location>
</feature>
<proteinExistence type="evidence at protein level"/>
<protein>
    <recommendedName>
        <fullName>Thrombin-like enzyme gyroxin analog</fullName>
        <shortName>LM-TL</shortName>
        <shortName>SVTLE</shortName>
        <ecNumber>3.4.21.74</ecNumber>
    </recommendedName>
    <alternativeName>
        <fullName>Fibrinogen-clotting enzyme</fullName>
    </alternativeName>
    <alternativeName>
        <fullName>Snake venom serine protease</fullName>
        <shortName>SVSP</shortName>
    </alternativeName>
    <alternativeName>
        <fullName>Venombin A</fullName>
    </alternativeName>
</protein>
<reference key="1">
    <citation type="journal article" date="1993" name="FEBS Lett.">
        <title>The complete amino acid sequence of a thrombin-like enzyme/gyroxin analogue from venom of the bushmaster snake (Lachesis muta muta).</title>
        <authorList>
            <person name="Magalhaes A."/>
            <person name="Campos-Brasil da Fonseca B."/>
            <person name="Ribeiro Diniz C."/>
            <person name="Gilroy J."/>
            <person name="Richarson M."/>
        </authorList>
    </citation>
    <scope>PROTEIN SEQUENCE</scope>
    <scope>FUNCTION</scope>
    <source>
        <tissue>Venom</tissue>
    </source>
</reference>
<reference key="2">
    <citation type="journal article" date="2001" name="Biochim. Biophys. Acta">
        <title>Structural features of a snake venom thrombin-like enzyme: thrombin and trypsin on a single catalytic platform?</title>
        <authorList>
            <person name="Castro H.C."/>
            <person name="Silva D.M."/>
            <person name="Craik C."/>
            <person name="Zingali R.B."/>
        </authorList>
    </citation>
    <scope>PROTEIN SEQUENCE</scope>
    <scope>SUBUNIT</scope>
    <scope>3D-STRUCTURE MODELING</scope>
</reference>
<reference key="3">
    <citation type="journal article" date="2001" name="Toxicon">
        <title>Gyroxin fails to modify in vitro release of labelled dopamine and acetylcholine from rat and mouse striatal tissue.</title>
        <authorList>
            <person name="Camillo M.A."/>
            <person name="Arruda Paes P.C."/>
            <person name="Troncone L.R."/>
            <person name="Rogero J.R."/>
        </authorList>
    </citation>
    <scope>FUNCTION</scope>
</reference>
<reference key="4">
    <citation type="journal article" date="1989" name="Toxicon">
        <title>A gyroxin analog from the venom of the bushmaster (Lachesis muta muta).</title>
        <authorList>
            <person name="da Silva N.J."/>
            <person name="Aird S.D."/>
            <person name="Seebart C."/>
            <person name="Kaiser I.I."/>
        </authorList>
    </citation>
    <scope>PROTEIN SEQUENCE OF 1-25</scope>
    <scope>FUNCTION</scope>
    <source>
        <tissue>Venom</tissue>
    </source>
</reference>
<organism>
    <name type="scientific">Lachesis muta muta</name>
    <name type="common">Bushmaster</name>
    <dbReference type="NCBI Taxonomy" id="8753"/>
    <lineage>
        <taxon>Eukaryota</taxon>
        <taxon>Metazoa</taxon>
        <taxon>Chordata</taxon>
        <taxon>Craniata</taxon>
        <taxon>Vertebrata</taxon>
        <taxon>Euteleostomi</taxon>
        <taxon>Lepidosauria</taxon>
        <taxon>Squamata</taxon>
        <taxon>Bifurcata</taxon>
        <taxon>Unidentata</taxon>
        <taxon>Episquamata</taxon>
        <taxon>Toxicofera</taxon>
        <taxon>Serpentes</taxon>
        <taxon>Colubroidea</taxon>
        <taxon>Viperidae</taxon>
        <taxon>Crotalinae</taxon>
        <taxon>Lachesis</taxon>
    </lineage>
</organism>
<evidence type="ECO:0000255" key="1"/>
<evidence type="ECO:0000255" key="2">
    <source>
        <dbReference type="PROSITE-ProRule" id="PRU00274"/>
    </source>
</evidence>
<evidence type="ECO:0000269" key="3">
    <source>
    </source>
</evidence>
<evidence type="ECO:0000269" key="4">
    <source>
    </source>
</evidence>
<evidence type="ECO:0000269" key="5">
    <source>
    </source>
</evidence>
<evidence type="ECO:0000269" key="6">
    <source>
    </source>
</evidence>
<evidence type="ECO:0000305" key="7"/>
<evidence type="ECO:0000305" key="8">
    <source>
    </source>
</evidence>